<evidence type="ECO:0000255" key="1">
    <source>
        <dbReference type="HAMAP-Rule" id="MF_01380"/>
    </source>
</evidence>
<keyword id="KW-0408">Iron</keyword>
<keyword id="KW-0411">Iron-sulfur</keyword>
<keyword id="KW-0479">Metal-binding</keyword>
<comment type="function">
    <text evidence="1">Required for insertion of 4Fe-4S clusters for at least IspG.</text>
</comment>
<comment type="cofactor">
    <cofactor evidence="1">
        <name>iron-sulfur cluster</name>
        <dbReference type="ChEBI" id="CHEBI:30408"/>
    </cofactor>
    <text evidence="1">Binds 1 iron-sulfur cluster per subunit.</text>
</comment>
<comment type="subunit">
    <text evidence="1">Homodimer.</text>
</comment>
<comment type="similarity">
    <text evidence="1">Belongs to the HesB/IscA family.</text>
</comment>
<protein>
    <recommendedName>
        <fullName evidence="1">Iron-sulfur cluster insertion protein ErpA</fullName>
    </recommendedName>
</protein>
<name>ERPA_HISS1</name>
<feature type="chain" id="PRO_0000311491" description="Iron-sulfur cluster insertion protein ErpA">
    <location>
        <begin position="1"/>
        <end position="113"/>
    </location>
</feature>
<feature type="binding site" evidence="1">
    <location>
        <position position="41"/>
    </location>
    <ligand>
        <name>iron-sulfur cluster</name>
        <dbReference type="ChEBI" id="CHEBI:30408"/>
    </ligand>
</feature>
<feature type="binding site" evidence="1">
    <location>
        <position position="105"/>
    </location>
    <ligand>
        <name>iron-sulfur cluster</name>
        <dbReference type="ChEBI" id="CHEBI:30408"/>
    </ligand>
</feature>
<feature type="binding site" evidence="1">
    <location>
        <position position="107"/>
    </location>
    <ligand>
        <name>iron-sulfur cluster</name>
        <dbReference type="ChEBI" id="CHEBI:30408"/>
    </ligand>
</feature>
<reference key="1">
    <citation type="journal article" date="2007" name="J. Bacteriol.">
        <title>Complete genome sequence of Haemophilus somnus (Histophilus somni) strain 129Pt and comparison to Haemophilus ducreyi 35000HP and Haemophilus influenzae Rd.</title>
        <authorList>
            <person name="Challacombe J.F."/>
            <person name="Duncan A.J."/>
            <person name="Brettin T.S."/>
            <person name="Bruce D."/>
            <person name="Chertkov O."/>
            <person name="Detter J.C."/>
            <person name="Han C.S."/>
            <person name="Misra M."/>
            <person name="Richardson P."/>
            <person name="Tapia R."/>
            <person name="Thayer N."/>
            <person name="Xie G."/>
            <person name="Inzana T.J."/>
        </authorList>
    </citation>
    <scope>NUCLEOTIDE SEQUENCE [LARGE SCALE GENOMIC DNA]</scope>
    <source>
        <strain>129Pt</strain>
    </source>
</reference>
<accession>Q0I3N9</accession>
<sequence length="113" mass="12016">MADLAVPLTFTDAAANKVKTLISEEENTELKLRVYITGGGCSGFQYGFTFDEKTNDGDLIVENSGVKLVVDPMSLQYLVGGTVDYTEGLEGSRFIVNNPNASTTCGCGSSFSI</sequence>
<dbReference type="EMBL" id="CP000436">
    <property type="protein sequence ID" value="ABI25102.1"/>
    <property type="molecule type" value="Genomic_DNA"/>
</dbReference>
<dbReference type="SMR" id="Q0I3N9"/>
<dbReference type="KEGG" id="hso:HS_0827"/>
<dbReference type="eggNOG" id="COG0316">
    <property type="taxonomic scope" value="Bacteria"/>
</dbReference>
<dbReference type="HOGENOM" id="CLU_069054_5_3_6"/>
<dbReference type="GO" id="GO:0005829">
    <property type="term" value="C:cytosol"/>
    <property type="evidence" value="ECO:0007669"/>
    <property type="project" value="TreeGrafter"/>
</dbReference>
<dbReference type="GO" id="GO:0051537">
    <property type="term" value="F:2 iron, 2 sulfur cluster binding"/>
    <property type="evidence" value="ECO:0007669"/>
    <property type="project" value="TreeGrafter"/>
</dbReference>
<dbReference type="GO" id="GO:0051539">
    <property type="term" value="F:4 iron, 4 sulfur cluster binding"/>
    <property type="evidence" value="ECO:0007669"/>
    <property type="project" value="TreeGrafter"/>
</dbReference>
<dbReference type="GO" id="GO:0005506">
    <property type="term" value="F:iron ion binding"/>
    <property type="evidence" value="ECO:0007669"/>
    <property type="project" value="UniProtKB-UniRule"/>
</dbReference>
<dbReference type="GO" id="GO:0016226">
    <property type="term" value="P:iron-sulfur cluster assembly"/>
    <property type="evidence" value="ECO:0007669"/>
    <property type="project" value="UniProtKB-UniRule"/>
</dbReference>
<dbReference type="FunFam" id="2.60.300.12:FF:000002">
    <property type="entry name" value="Iron-sulfur cluster insertion protein ErpA"/>
    <property type="match status" value="1"/>
</dbReference>
<dbReference type="Gene3D" id="2.60.300.12">
    <property type="entry name" value="HesB-like domain"/>
    <property type="match status" value="1"/>
</dbReference>
<dbReference type="HAMAP" id="MF_01380">
    <property type="entry name" value="Fe_S_insert_ErpA"/>
    <property type="match status" value="1"/>
</dbReference>
<dbReference type="InterPro" id="IPR000361">
    <property type="entry name" value="FeS_biogenesis"/>
</dbReference>
<dbReference type="InterPro" id="IPR016092">
    <property type="entry name" value="FeS_cluster_insertion"/>
</dbReference>
<dbReference type="InterPro" id="IPR017870">
    <property type="entry name" value="FeS_cluster_insertion_CS"/>
</dbReference>
<dbReference type="InterPro" id="IPR023063">
    <property type="entry name" value="FeS_cluster_insertion_RrpA"/>
</dbReference>
<dbReference type="InterPro" id="IPR035903">
    <property type="entry name" value="HesB-like_dom_sf"/>
</dbReference>
<dbReference type="NCBIfam" id="TIGR00049">
    <property type="entry name" value="iron-sulfur cluster assembly accessory protein"/>
    <property type="match status" value="1"/>
</dbReference>
<dbReference type="NCBIfam" id="NF010147">
    <property type="entry name" value="PRK13623.1"/>
    <property type="match status" value="1"/>
</dbReference>
<dbReference type="PANTHER" id="PTHR43011">
    <property type="entry name" value="IRON-SULFUR CLUSTER ASSEMBLY 2 HOMOLOG, MITOCHONDRIAL"/>
    <property type="match status" value="1"/>
</dbReference>
<dbReference type="PANTHER" id="PTHR43011:SF1">
    <property type="entry name" value="IRON-SULFUR CLUSTER ASSEMBLY 2 HOMOLOG, MITOCHONDRIAL"/>
    <property type="match status" value="1"/>
</dbReference>
<dbReference type="Pfam" id="PF01521">
    <property type="entry name" value="Fe-S_biosyn"/>
    <property type="match status" value="1"/>
</dbReference>
<dbReference type="SUPFAM" id="SSF89360">
    <property type="entry name" value="HesB-like domain"/>
    <property type="match status" value="1"/>
</dbReference>
<dbReference type="PROSITE" id="PS01152">
    <property type="entry name" value="HESB"/>
    <property type="match status" value="1"/>
</dbReference>
<proteinExistence type="inferred from homology"/>
<organism>
    <name type="scientific">Histophilus somni (strain 129Pt)</name>
    <name type="common">Haemophilus somnus</name>
    <dbReference type="NCBI Taxonomy" id="205914"/>
    <lineage>
        <taxon>Bacteria</taxon>
        <taxon>Pseudomonadati</taxon>
        <taxon>Pseudomonadota</taxon>
        <taxon>Gammaproteobacteria</taxon>
        <taxon>Pasteurellales</taxon>
        <taxon>Pasteurellaceae</taxon>
        <taxon>Histophilus</taxon>
    </lineage>
</organism>
<gene>
    <name evidence="1" type="primary">erpA</name>
    <name type="ordered locus">HS_0827</name>
</gene>